<keyword id="KW-0106">Calcium</keyword>
<keyword id="KW-0324">Glycolysis</keyword>
<keyword id="KW-1017">Isopeptide bond</keyword>
<keyword id="KW-0460">Magnesium</keyword>
<keyword id="KW-0479">Metal-binding</keyword>
<keyword id="KW-0496">Mitochondrion</keyword>
<keyword id="KW-0539">Nucleus</keyword>
<keyword id="KW-0560">Oxidoreductase</keyword>
<keyword id="KW-1185">Reference proteome</keyword>
<keyword id="KW-0786">Thiamine pyrophosphate</keyword>
<keyword id="KW-0809">Transit peptide</keyword>
<keyword id="KW-0832">Ubl conjugation</keyword>
<name>ODO1_XENLA</name>
<protein>
    <recommendedName>
        <fullName>2-oxoglutarate dehydrogenase complex component E1</fullName>
        <shortName>E1o</shortName>
        <shortName>OGDC-E1</shortName>
        <shortName>OGDH-E1</shortName>
        <ecNumber evidence="2">1.2.4.2</ecNumber>
    </recommendedName>
    <alternativeName>
        <fullName>2-oxoglutarate dehydrogenase, mitochondrial</fullName>
    </alternativeName>
    <alternativeName>
        <fullName>Alpha-ketoglutarate dehydrogenase</fullName>
        <shortName>Alpha-KGDH-E1</shortName>
    </alternativeName>
    <alternativeName>
        <fullName>Thiamine diphosphate (ThDP)-dependent 2-oxoglutarate dehydrogenase</fullName>
    </alternativeName>
</protein>
<evidence type="ECO:0000250" key="1"/>
<evidence type="ECO:0000250" key="2">
    <source>
        <dbReference type="UniProtKB" id="Q02218"/>
    </source>
</evidence>
<evidence type="ECO:0000250" key="3">
    <source>
        <dbReference type="UniProtKB" id="Q5XI78"/>
    </source>
</evidence>
<evidence type="ECO:0000250" key="4">
    <source>
        <dbReference type="UniProtKB" id="Q96HY7"/>
    </source>
</evidence>
<evidence type="ECO:0000255" key="5"/>
<evidence type="ECO:0000269" key="6">
    <source>
    </source>
</evidence>
<evidence type="ECO:0000305" key="7"/>
<comment type="function">
    <text evidence="2">2-oxoglutarate dehydrogenase (E1o) component of the 2-oxoglutarate dehydrogenase complex (OGDHC). Participates in the first step, rate limiting for the overall conversion of 2-oxoglutarate to succinyl-CoA and CO(2) catalyzed by the whole OGDHC. Catalyzes the irreversible decarboxylation of 2-oxoglutarate (alpha-ketoglutarate) via the thiamine diphosphate (ThDP) cofactor and subsequent transfer of the decarboxylated acyl intermediate on an oxidized dihydrolipoyl group that is covalently amidated to the E2 enzyme (dihydrolipoyllysine-residue succinyltransferase or DLST). Plays a key role in the Krebs (citric acid) cycle, which is a common pathway for oxidation of fuel molecules, including carbohydrates, fatty acids, and amino acids. Can catalyze the decarboxylation of 2-oxoadipate in vitro, but at a much lower rate than 2-oxoglutarate. Mainly active in the mitochondrion. A fraction of the 2-oxoglutarate dehydrogenase complex also localizes in the nucleus and is required for lysine succinylation of histones: associates with KAT2A on chromatin and provides succinyl-CoA to histone succinyltransferase KAT2A.</text>
</comment>
<comment type="catalytic activity">
    <reaction evidence="2">
        <text>N(6)-[(R)-lipoyl]-L-lysyl-[protein] + 2-oxoglutarate + H(+) = N(6)-[(R)-S(8)-succinyldihydrolipoyl]-L-lysyl-[protein] + CO2</text>
        <dbReference type="Rhea" id="RHEA:12188"/>
        <dbReference type="Rhea" id="RHEA-COMP:10474"/>
        <dbReference type="Rhea" id="RHEA-COMP:20092"/>
        <dbReference type="ChEBI" id="CHEBI:15378"/>
        <dbReference type="ChEBI" id="CHEBI:16526"/>
        <dbReference type="ChEBI" id="CHEBI:16810"/>
        <dbReference type="ChEBI" id="CHEBI:83099"/>
        <dbReference type="ChEBI" id="CHEBI:83120"/>
        <dbReference type="EC" id="1.2.4.2"/>
    </reaction>
    <physiologicalReaction direction="left-to-right" evidence="2">
        <dbReference type="Rhea" id="RHEA:12189"/>
    </physiologicalReaction>
</comment>
<comment type="cofactor">
    <cofactor evidence="2">
        <name>thiamine diphosphate</name>
        <dbReference type="ChEBI" id="CHEBI:58937"/>
    </cofactor>
    <cofactor evidence="2">
        <name>Mg(2+)</name>
        <dbReference type="ChEBI" id="CHEBI:18420"/>
    </cofactor>
</comment>
<comment type="activity regulation">
    <text evidence="2">Calcium ions and ADP stimulate, whereas ATP and NADH reduce catalytic activity.</text>
</comment>
<comment type="subunit">
    <text evidence="2">Homodimer (By similarity). The 2-oxoglutarate dehydrogenase complex is composed of OGDH (2-oxoglutarate dehydrogenase; E1), DLST (dihydrolipoamide succinyltransferase; E2) and DLD (dihydrolipoamide dehydrogenase; E3). It contains multiple copies of the three enzymatic components (E1, E2 and E3). In the nucleus, the 2-oxoglutarate dehydrogenase complex associates with kat2a.</text>
</comment>
<comment type="subcellular location">
    <subcellularLocation>
        <location evidence="3">Mitochondrion</location>
    </subcellularLocation>
    <subcellularLocation>
        <location evidence="2">Nucleus</location>
    </subcellularLocation>
    <text evidence="2">Mainly localizes in the mitochondrion. A small fraction localizes to the nucleus, where the 2-oxoglutarate dehydrogenase complex is required for histone succinylation.</text>
</comment>
<comment type="tissue specificity">
    <text evidence="6">Expressed in the brain.</text>
</comment>
<comment type="miscellaneous">
    <text evidence="4">The mitochondrial 2-oxoglutarate and 2-oxoadipate dehydrogenase complexes (OGDHC and OADHC, respectively) share their E2 (DLST) and E3 (dihydrolipoyl dehydrogenase or DLD) components, but the E1 component is specific to each complex (E1o and E1a (DHTK1), respectively).</text>
</comment>
<comment type="similarity">
    <text evidence="7">Belongs to the alpha-ketoglutarate dehydrogenase family.</text>
</comment>
<accession>Q6P6Z8</accession>
<accession>Q6GP46</accession>
<proteinExistence type="evidence at transcript level"/>
<gene>
    <name type="primary">ogdh</name>
</gene>
<organism>
    <name type="scientific">Xenopus laevis</name>
    <name type="common">African clawed frog</name>
    <dbReference type="NCBI Taxonomy" id="8355"/>
    <lineage>
        <taxon>Eukaryota</taxon>
        <taxon>Metazoa</taxon>
        <taxon>Chordata</taxon>
        <taxon>Craniata</taxon>
        <taxon>Vertebrata</taxon>
        <taxon>Euteleostomi</taxon>
        <taxon>Amphibia</taxon>
        <taxon>Batrachia</taxon>
        <taxon>Anura</taxon>
        <taxon>Pipoidea</taxon>
        <taxon>Pipidae</taxon>
        <taxon>Xenopodinae</taxon>
        <taxon>Xenopus</taxon>
        <taxon>Xenopus</taxon>
    </lineage>
</organism>
<feature type="transit peptide" description="Mitochondrion" evidence="5">
    <location>
        <begin position="1"/>
        <end position="40"/>
    </location>
</feature>
<feature type="chain" id="PRO_0000310982" description="2-oxoglutarate dehydrogenase complex component E1">
    <location>
        <begin position="41"/>
        <end position="1021"/>
    </location>
</feature>
<feature type="binding site" evidence="2">
    <location>
        <position position="142"/>
    </location>
    <ligand>
        <name>Ca(2+)</name>
        <dbReference type="ChEBI" id="CHEBI:29108"/>
    </ligand>
</feature>
<feature type="binding site" evidence="2">
    <location>
        <position position="155"/>
    </location>
    <ligand>
        <name>Ca(2+)</name>
        <dbReference type="ChEBI" id="CHEBI:29108"/>
    </ligand>
</feature>
<feature type="binding site" evidence="2">
    <location>
        <position position="157"/>
    </location>
    <ligand>
        <name>Ca(2+)</name>
        <dbReference type="ChEBI" id="CHEBI:29108"/>
    </ligand>
</feature>
<feature type="binding site" evidence="2">
    <location>
        <position position="311"/>
    </location>
    <ligand>
        <name>thiamine diphosphate</name>
        <dbReference type="ChEBI" id="CHEBI:58937"/>
    </ligand>
</feature>
<feature type="binding site" evidence="2">
    <location>
        <position position="410"/>
    </location>
    <ligand>
        <name>Mg(2+)</name>
        <dbReference type="ChEBI" id="CHEBI:18420"/>
    </ligand>
</feature>
<feature type="binding site" evidence="2">
    <location>
        <position position="410"/>
    </location>
    <ligand>
        <name>thiamine diphosphate</name>
        <dbReference type="ChEBI" id="CHEBI:58937"/>
    </ligand>
</feature>
<feature type="binding site" evidence="2">
    <location>
        <position position="443"/>
    </location>
    <ligand>
        <name>Mg(2+)</name>
        <dbReference type="ChEBI" id="CHEBI:18420"/>
    </ligand>
</feature>
<feature type="binding site" evidence="2">
    <location>
        <position position="443"/>
    </location>
    <ligand>
        <name>thiamine diphosphate</name>
        <dbReference type="ChEBI" id="CHEBI:58937"/>
    </ligand>
</feature>
<feature type="binding site" evidence="2">
    <location>
        <position position="445"/>
    </location>
    <ligand>
        <name>Mg(2+)</name>
        <dbReference type="ChEBI" id="CHEBI:18420"/>
    </ligand>
</feature>
<feature type="binding site" evidence="2">
    <location>
        <position position="445"/>
    </location>
    <ligand>
        <name>thiamine diphosphate</name>
        <dbReference type="ChEBI" id="CHEBI:58937"/>
    </ligand>
</feature>
<feature type="binding site" evidence="2">
    <location>
        <position position="675"/>
    </location>
    <ligand>
        <name>thiamine diphosphate</name>
        <dbReference type="ChEBI" id="CHEBI:58937"/>
    </ligand>
</feature>
<feature type="cross-link" description="Glycyl lysine isopeptide (Lys-Gly) (interchain with G-Cter in ubiquitin)" evidence="1">
    <location>
        <position position="533"/>
    </location>
</feature>
<feature type="sequence conflict" description="In Ref. 1; AAH73298." evidence="7" ref="1">
    <original>S</original>
    <variation>A</variation>
    <location>
        <position position="115"/>
    </location>
</feature>
<reference key="1">
    <citation type="submission" date="2003-11" db="EMBL/GenBank/DDBJ databases">
        <authorList>
            <consortium name="NIH - Xenopus Gene Collection (XGC) project"/>
        </authorList>
    </citation>
    <scope>NUCLEOTIDE SEQUENCE [LARGE SCALE MRNA]</scope>
    <source>
        <tissue>Embryo</tissue>
        <tissue>Spleen</tissue>
    </source>
</reference>
<reference key="2">
    <citation type="journal article" date="2006" name="Neurosci. Lett.">
        <title>Identification and mRNA expression of Ogdh, QP-C, and two predicted genes in the postnatal mouse brain.</title>
        <authorList>
            <person name="Sadakata T."/>
            <person name="Furuichi T."/>
        </authorList>
    </citation>
    <scope>TISSUE SPECIFICITY</scope>
</reference>
<dbReference type="EC" id="1.2.4.2" evidence="2"/>
<dbReference type="EMBL" id="BC061938">
    <property type="protein sequence ID" value="AAH61938.1"/>
    <property type="molecule type" value="mRNA"/>
</dbReference>
<dbReference type="EMBL" id="BC073298">
    <property type="protein sequence ID" value="AAH73298.1"/>
    <property type="molecule type" value="mRNA"/>
</dbReference>
<dbReference type="RefSeq" id="NP_001083614.1">
    <property type="nucleotide sequence ID" value="NM_001090145.1"/>
</dbReference>
<dbReference type="RefSeq" id="XP_018109665.1">
    <property type="nucleotide sequence ID" value="XM_018254176.1"/>
</dbReference>
<dbReference type="RefSeq" id="XP_018109666.1">
    <property type="nucleotide sequence ID" value="XM_018254177.1"/>
</dbReference>
<dbReference type="SMR" id="Q6P6Z8"/>
<dbReference type="DNASU" id="399021"/>
<dbReference type="GeneID" id="399021"/>
<dbReference type="KEGG" id="xla:399021"/>
<dbReference type="AGR" id="Xenbase:XB-GENE-1010765"/>
<dbReference type="CTD" id="399021"/>
<dbReference type="Xenbase" id="XB-GENE-1010765">
    <property type="gene designation" value="ogdh.S"/>
</dbReference>
<dbReference type="OrthoDB" id="413077at2759"/>
<dbReference type="SABIO-RK" id="Q6P6Z8"/>
<dbReference type="Proteomes" id="UP000186698">
    <property type="component" value="Chromosome 3S"/>
</dbReference>
<dbReference type="Bgee" id="399021">
    <property type="expression patterns" value="Expressed in egg cell and 19 other cell types or tissues"/>
</dbReference>
<dbReference type="GO" id="GO:0005739">
    <property type="term" value="C:mitochondrion"/>
    <property type="evidence" value="ECO:0000250"/>
    <property type="project" value="UniProtKB"/>
</dbReference>
<dbReference type="GO" id="GO:0005634">
    <property type="term" value="C:nucleus"/>
    <property type="evidence" value="ECO:0000250"/>
    <property type="project" value="UniProtKB"/>
</dbReference>
<dbReference type="GO" id="GO:0045252">
    <property type="term" value="C:oxoglutarate dehydrogenase complex"/>
    <property type="evidence" value="ECO:0000250"/>
    <property type="project" value="UniProtKB"/>
</dbReference>
<dbReference type="GO" id="GO:0046872">
    <property type="term" value="F:metal ion binding"/>
    <property type="evidence" value="ECO:0007669"/>
    <property type="project" value="UniProtKB-KW"/>
</dbReference>
<dbReference type="GO" id="GO:0004591">
    <property type="term" value="F:oxoglutarate dehydrogenase (succinyl-transferring) activity"/>
    <property type="evidence" value="ECO:0000250"/>
    <property type="project" value="UniProtKB"/>
</dbReference>
<dbReference type="GO" id="GO:0030976">
    <property type="term" value="F:thiamine pyrophosphate binding"/>
    <property type="evidence" value="ECO:0000250"/>
    <property type="project" value="UniProtKB"/>
</dbReference>
<dbReference type="GO" id="GO:0006103">
    <property type="term" value="P:2-oxoglutarate metabolic process"/>
    <property type="evidence" value="ECO:0000250"/>
    <property type="project" value="UniProtKB"/>
</dbReference>
<dbReference type="GO" id="GO:0006096">
    <property type="term" value="P:glycolytic process"/>
    <property type="evidence" value="ECO:0007669"/>
    <property type="project" value="UniProtKB-KW"/>
</dbReference>
<dbReference type="GO" id="GO:0006104">
    <property type="term" value="P:succinyl-CoA metabolic process"/>
    <property type="evidence" value="ECO:0000250"/>
    <property type="project" value="UniProtKB"/>
</dbReference>
<dbReference type="GO" id="GO:0006099">
    <property type="term" value="P:tricarboxylic acid cycle"/>
    <property type="evidence" value="ECO:0000318"/>
    <property type="project" value="GO_Central"/>
</dbReference>
<dbReference type="CDD" id="cd02016">
    <property type="entry name" value="TPP_E1_OGDC_like"/>
    <property type="match status" value="1"/>
</dbReference>
<dbReference type="FunFam" id="3.40.50.12470:FF:000007">
    <property type="entry name" value="2-oxoglutarate dehydrogenase e1 mitochondrial"/>
    <property type="match status" value="1"/>
</dbReference>
<dbReference type="FunFam" id="3.40.50.970:FF:000002">
    <property type="entry name" value="2-oxoglutarate dehydrogenase, E1 component"/>
    <property type="match status" value="1"/>
</dbReference>
<dbReference type="FunFam" id="3.40.50.11610:FF:000003">
    <property type="entry name" value="2-oxoglutarate dehydrogenase, isoform X4"/>
    <property type="match status" value="1"/>
</dbReference>
<dbReference type="FunFam" id="1.10.287.1150:FF:000001">
    <property type="entry name" value="2-oxoglutarate dehydrogenase, mitochondrial isoform X1"/>
    <property type="match status" value="1"/>
</dbReference>
<dbReference type="Gene3D" id="3.40.50.12470">
    <property type="match status" value="1"/>
</dbReference>
<dbReference type="Gene3D" id="3.40.50.970">
    <property type="match status" value="1"/>
</dbReference>
<dbReference type="Gene3D" id="3.40.50.11610">
    <property type="entry name" value="Multifunctional 2-oxoglutarate metabolism enzyme, C-terminal domain"/>
    <property type="match status" value="1"/>
</dbReference>
<dbReference type="Gene3D" id="1.10.287.1150">
    <property type="entry name" value="TPP helical domain"/>
    <property type="match status" value="1"/>
</dbReference>
<dbReference type="InterPro" id="IPR032106">
    <property type="entry name" value="2-oxogl_dehyd_N"/>
</dbReference>
<dbReference type="InterPro" id="IPR011603">
    <property type="entry name" value="2oxoglutarate_DH_E1"/>
</dbReference>
<dbReference type="InterPro" id="IPR001017">
    <property type="entry name" value="DH_E1"/>
</dbReference>
<dbReference type="InterPro" id="IPR042179">
    <property type="entry name" value="KGD_C_sf"/>
</dbReference>
<dbReference type="InterPro" id="IPR031717">
    <property type="entry name" value="ODO-1/KGD_C"/>
</dbReference>
<dbReference type="InterPro" id="IPR029061">
    <property type="entry name" value="THDP-binding"/>
</dbReference>
<dbReference type="InterPro" id="IPR005475">
    <property type="entry name" value="Transketolase-like_Pyr-bd"/>
</dbReference>
<dbReference type="NCBIfam" id="TIGR00239">
    <property type="entry name" value="2oxo_dh_E1"/>
    <property type="match status" value="1"/>
</dbReference>
<dbReference type="NCBIfam" id="NF006914">
    <property type="entry name" value="PRK09404.1"/>
    <property type="match status" value="1"/>
</dbReference>
<dbReference type="NCBIfam" id="NF008907">
    <property type="entry name" value="PRK12270.1"/>
    <property type="match status" value="1"/>
</dbReference>
<dbReference type="PANTHER" id="PTHR23152">
    <property type="entry name" value="2-OXOGLUTARATE DEHYDROGENASE"/>
    <property type="match status" value="1"/>
</dbReference>
<dbReference type="PANTHER" id="PTHR23152:SF7">
    <property type="entry name" value="2-OXOGLUTARATE DEHYDROGENASE COMPLEX COMPONENT E1"/>
    <property type="match status" value="1"/>
</dbReference>
<dbReference type="Pfam" id="PF16078">
    <property type="entry name" value="2-oxogl_dehyd_N"/>
    <property type="match status" value="1"/>
</dbReference>
<dbReference type="Pfam" id="PF00676">
    <property type="entry name" value="E1_dh"/>
    <property type="match status" value="1"/>
</dbReference>
<dbReference type="Pfam" id="PF16870">
    <property type="entry name" value="OxoGdeHyase_C"/>
    <property type="match status" value="1"/>
</dbReference>
<dbReference type="Pfam" id="PF02779">
    <property type="entry name" value="Transket_pyr"/>
    <property type="match status" value="1"/>
</dbReference>
<dbReference type="PIRSF" id="PIRSF000157">
    <property type="entry name" value="Oxoglu_dh_E1"/>
    <property type="match status" value="1"/>
</dbReference>
<dbReference type="SMART" id="SM00861">
    <property type="entry name" value="Transket_pyr"/>
    <property type="match status" value="1"/>
</dbReference>
<dbReference type="SUPFAM" id="SSF52518">
    <property type="entry name" value="Thiamin diphosphate-binding fold (THDP-binding)"/>
    <property type="match status" value="2"/>
</dbReference>
<sequence>MFNLRTCASKLRPLTASQTIRSLKHNRPAAPRTFQQFRCLSTPVAAEPFLSGTNSNYVEEMYYAWLENPKSVHKSWDIFFRNANAGASPGAAYQSPPSLGSSLSTLTQAQSLLHSQPNVDKLVEDHLAVQSLIRAYQIRGHHVAQLDPLGILDADLDSCVPADIVTSSDKLGFYGLQESDLDKVFHLPTTTFIGGNEMALPLREIIRRLENAYCQHIGVEFMFINDLEQCQWIRQKFEAPGIMQFNNEEKRTLLARLVRSTRFEEFLHRKWSSEKRFGLEGCEVLIPALKTIIDKSSGNGVDYVIMGMPHRGRLNVLANVIRKELEQIFCQFDSKLEATDEGSGDVKYHLGMYHRRINRVTDRNITLSLVANPSHLEAADPVVQGKTKAEQFYCGDTEGKKVMAILLHGDAAFAGQGIVYETFHLSDLPSHTTHGTVHVVVNNQIGFTTDPRMARSSPYPTDVARVVNAPIFHVNADDPEAVMYVCNVAAEWRSTFHKDVVVDLVCYRRNGHNEMDEPMFTQPLMYKQIRKQKAVLQKYAETLISQGVVNQLEYEEEISKYDKICEEAFARSKDEKILHIKHWLDSPWPGFFTLDGQPRSMTCPSTGLTEEDLTHIGNVASSVPVEDFMIHGGLSRILKGRGEMVKNRTVDWALAEYMALGSLLKEGIHIRLSGQDVERGTFSHRHHVLHDQNVDKRTCIPMNHLWPNQAPYTVCNSSLSEYGVLGFELGFAMASPNALVLWEAQFGDFHNTAQCIIDQFVCPGQAKWVRQNGIVLLLPHGMEGMGPEHSSARPERFLQMCNDDPDVWPKASEDFAVGQLYDCNWIVVNCSTPANFFHVIRRQILLPFRKPLIVFTPKSLLRHPEARSSFDDMLPSTHFQRIIPEAGPASQNPEGVKRLIFCTGKVYYELTKERSGRDMEGDVAIARVEQLSPFPFDLVEKEVQKYPNADLVWCQEEHKNQGYYDYVKPRLRTTIHRTKPVWYAGRDPAAAPATGNKKTHLTELRRFLDTAFNLDAFKGHF</sequence>